<feature type="chain" id="PRO_1000201547" description="Vitamin B12 import system permease protein BtuC">
    <location>
        <begin position="1"/>
        <end position="326"/>
    </location>
</feature>
<feature type="transmembrane region" description="Helical" evidence="1">
    <location>
        <begin position="15"/>
        <end position="35"/>
    </location>
</feature>
<feature type="transmembrane region" description="Helical" evidence="1">
    <location>
        <begin position="61"/>
        <end position="81"/>
    </location>
</feature>
<feature type="transmembrane region" description="Helical" evidence="1">
    <location>
        <begin position="88"/>
        <end position="108"/>
    </location>
</feature>
<feature type="transmembrane region" description="Helical" evidence="1">
    <location>
        <begin position="112"/>
        <end position="132"/>
    </location>
</feature>
<feature type="transmembrane region" description="Helical" evidence="1">
    <location>
        <begin position="146"/>
        <end position="166"/>
    </location>
</feature>
<feature type="transmembrane region" description="Helical" evidence="1">
    <location>
        <begin position="184"/>
        <end position="204"/>
    </location>
</feature>
<feature type="transmembrane region" description="Helical" evidence="1">
    <location>
        <begin position="240"/>
        <end position="260"/>
    </location>
</feature>
<feature type="transmembrane region" description="Helical" evidence="1">
    <location>
        <begin position="274"/>
        <end position="294"/>
    </location>
</feature>
<feature type="transmembrane region" description="Helical" evidence="1">
    <location>
        <begin position="302"/>
        <end position="322"/>
    </location>
</feature>
<name>BTUC_ECO45</name>
<proteinExistence type="inferred from homology"/>
<accession>B7MAS2</accession>
<evidence type="ECO:0000255" key="1">
    <source>
        <dbReference type="HAMAP-Rule" id="MF_01004"/>
    </source>
</evidence>
<comment type="function">
    <text evidence="1">Part of the ABC transporter complex BtuCDF involved in vitamin B12 import. Involved in the translocation of the substrate across the membrane.</text>
</comment>
<comment type="subunit">
    <text evidence="1">The complex is composed of two ATP-binding proteins (BtuD), two transmembrane proteins (BtuC) and a solute-binding protein (BtuF).</text>
</comment>
<comment type="subcellular location">
    <subcellularLocation>
        <location evidence="1">Cell inner membrane</location>
        <topology evidence="1">Multi-pass membrane protein</topology>
    </subcellularLocation>
</comment>
<comment type="similarity">
    <text evidence="1">Belongs to the binding-protein-dependent transport system permease family. FecCD subfamily.</text>
</comment>
<protein>
    <recommendedName>
        <fullName evidence="1">Vitamin B12 import system permease protein BtuC</fullName>
    </recommendedName>
</protein>
<reference key="1">
    <citation type="journal article" date="2009" name="PLoS Genet.">
        <title>Organised genome dynamics in the Escherichia coli species results in highly diverse adaptive paths.</title>
        <authorList>
            <person name="Touchon M."/>
            <person name="Hoede C."/>
            <person name="Tenaillon O."/>
            <person name="Barbe V."/>
            <person name="Baeriswyl S."/>
            <person name="Bidet P."/>
            <person name="Bingen E."/>
            <person name="Bonacorsi S."/>
            <person name="Bouchier C."/>
            <person name="Bouvet O."/>
            <person name="Calteau A."/>
            <person name="Chiapello H."/>
            <person name="Clermont O."/>
            <person name="Cruveiller S."/>
            <person name="Danchin A."/>
            <person name="Diard M."/>
            <person name="Dossat C."/>
            <person name="Karoui M.E."/>
            <person name="Frapy E."/>
            <person name="Garry L."/>
            <person name="Ghigo J.M."/>
            <person name="Gilles A.M."/>
            <person name="Johnson J."/>
            <person name="Le Bouguenec C."/>
            <person name="Lescat M."/>
            <person name="Mangenot S."/>
            <person name="Martinez-Jehanne V."/>
            <person name="Matic I."/>
            <person name="Nassif X."/>
            <person name="Oztas S."/>
            <person name="Petit M.A."/>
            <person name="Pichon C."/>
            <person name="Rouy Z."/>
            <person name="Ruf C.S."/>
            <person name="Schneider D."/>
            <person name="Tourret J."/>
            <person name="Vacherie B."/>
            <person name="Vallenet D."/>
            <person name="Medigue C."/>
            <person name="Rocha E.P.C."/>
            <person name="Denamur E."/>
        </authorList>
    </citation>
    <scope>NUCLEOTIDE SEQUENCE [LARGE SCALE GENOMIC DNA]</scope>
    <source>
        <strain>S88 / ExPEC</strain>
    </source>
</reference>
<sequence length="326" mass="34949">MLTLARQQQRQNIRWLLCLSVLMLLALLLSLCAGEQWISPGDWFTPRGELFVWQIRLPRTLAVLLVGAALAISGAVMQALFENPLAEPGLLGVSNGAGVGLIAAVLLGQGQLPNWALGLCAIAGALIITLILLRFARRHLSTSRLLLAGVALGIICSALMTWAIYFSTSVDLRQLMYWMMGGFGGVDWRQSWLMLALIPVLLWICCQSRPMNMLALGEISARQLGLPLWFWRNVLVAATGWMVGVSVALAGAIGFIGLVIPHILRLCGLTDHRVLLPGCALAGASALLLADIVARLALAAAELPIGVVTATLGAPVFIWLLLKAGR</sequence>
<organism>
    <name type="scientific">Escherichia coli O45:K1 (strain S88 / ExPEC)</name>
    <dbReference type="NCBI Taxonomy" id="585035"/>
    <lineage>
        <taxon>Bacteria</taxon>
        <taxon>Pseudomonadati</taxon>
        <taxon>Pseudomonadota</taxon>
        <taxon>Gammaproteobacteria</taxon>
        <taxon>Enterobacterales</taxon>
        <taxon>Enterobacteriaceae</taxon>
        <taxon>Escherichia</taxon>
    </lineage>
</organism>
<gene>
    <name evidence="1" type="primary">btuC</name>
    <name type="ordered locus">ECS88_1762</name>
</gene>
<keyword id="KW-0997">Cell inner membrane</keyword>
<keyword id="KW-1003">Cell membrane</keyword>
<keyword id="KW-0472">Membrane</keyword>
<keyword id="KW-1185">Reference proteome</keyword>
<keyword id="KW-0812">Transmembrane</keyword>
<keyword id="KW-1133">Transmembrane helix</keyword>
<keyword id="KW-0813">Transport</keyword>
<dbReference type="EMBL" id="CU928161">
    <property type="protein sequence ID" value="CAR03071.1"/>
    <property type="molecule type" value="Genomic_DNA"/>
</dbReference>
<dbReference type="RefSeq" id="WP_000956528.1">
    <property type="nucleotide sequence ID" value="NC_011742.1"/>
</dbReference>
<dbReference type="SMR" id="B7MAS2"/>
<dbReference type="KEGG" id="ecz:ECS88_1762"/>
<dbReference type="HOGENOM" id="CLU_013016_0_3_6"/>
<dbReference type="Proteomes" id="UP000000747">
    <property type="component" value="Chromosome"/>
</dbReference>
<dbReference type="GO" id="GO:0005886">
    <property type="term" value="C:plasma membrane"/>
    <property type="evidence" value="ECO:0007669"/>
    <property type="project" value="UniProtKB-SubCell"/>
</dbReference>
<dbReference type="GO" id="GO:0090482">
    <property type="term" value="F:vitamin transmembrane transporter activity"/>
    <property type="evidence" value="ECO:0007669"/>
    <property type="project" value="UniProtKB-UniRule"/>
</dbReference>
<dbReference type="GO" id="GO:0015889">
    <property type="term" value="P:cobalamin transport"/>
    <property type="evidence" value="ECO:0007669"/>
    <property type="project" value="UniProtKB-UniRule"/>
</dbReference>
<dbReference type="CDD" id="cd06550">
    <property type="entry name" value="TM_ABC_iron-siderophores_like"/>
    <property type="match status" value="1"/>
</dbReference>
<dbReference type="FunFam" id="1.10.3470.10:FF:000001">
    <property type="entry name" value="Vitamin B12 ABC transporter permease BtuC"/>
    <property type="match status" value="1"/>
</dbReference>
<dbReference type="Gene3D" id="1.10.3470.10">
    <property type="entry name" value="ABC transporter involved in vitamin B12 uptake, BtuC"/>
    <property type="match status" value="1"/>
</dbReference>
<dbReference type="HAMAP" id="MF_01004">
    <property type="entry name" value="BtuC"/>
    <property type="match status" value="1"/>
</dbReference>
<dbReference type="InterPro" id="IPR037294">
    <property type="entry name" value="ABC_BtuC-like"/>
</dbReference>
<dbReference type="InterPro" id="IPR023691">
    <property type="entry name" value="ABC_transptr_BtuC"/>
</dbReference>
<dbReference type="InterPro" id="IPR000522">
    <property type="entry name" value="ABC_transptr_permease_BtuC"/>
</dbReference>
<dbReference type="NCBIfam" id="NF003001">
    <property type="entry name" value="PRK03784.1"/>
    <property type="match status" value="1"/>
</dbReference>
<dbReference type="PANTHER" id="PTHR30472">
    <property type="entry name" value="FERRIC ENTEROBACTIN TRANSPORT SYSTEM PERMEASE PROTEIN"/>
    <property type="match status" value="1"/>
</dbReference>
<dbReference type="PANTHER" id="PTHR30472:SF29">
    <property type="entry name" value="VITAMIN B12 IMPORT SYSTEM PERMEASE PROTEIN BTUC"/>
    <property type="match status" value="1"/>
</dbReference>
<dbReference type="Pfam" id="PF01032">
    <property type="entry name" value="FecCD"/>
    <property type="match status" value="1"/>
</dbReference>
<dbReference type="SUPFAM" id="SSF81345">
    <property type="entry name" value="ABC transporter involved in vitamin B12 uptake, BtuC"/>
    <property type="match status" value="1"/>
</dbReference>